<keyword id="KW-0678">Repressor</keyword>
<keyword id="KW-0687">Ribonucleoprotein</keyword>
<keyword id="KW-0689">Ribosomal protein</keyword>
<keyword id="KW-0694">RNA-binding</keyword>
<keyword id="KW-0699">rRNA-binding</keyword>
<keyword id="KW-0810">Translation regulation</keyword>
<keyword id="KW-0820">tRNA-binding</keyword>
<proteinExistence type="inferred from homology"/>
<protein>
    <recommendedName>
        <fullName evidence="1">Large ribosomal subunit protein uL1</fullName>
    </recommendedName>
    <alternativeName>
        <fullName evidence="2">50S ribosomal protein L1</fullName>
    </alternativeName>
</protein>
<organism>
    <name type="scientific">Solidesulfovibrio magneticus (strain ATCC 700980 / DSM 13731 / RS-1)</name>
    <name type="common">Desulfovibrio magneticus</name>
    <dbReference type="NCBI Taxonomy" id="573370"/>
    <lineage>
        <taxon>Bacteria</taxon>
        <taxon>Pseudomonadati</taxon>
        <taxon>Thermodesulfobacteriota</taxon>
        <taxon>Desulfovibrionia</taxon>
        <taxon>Desulfovibrionales</taxon>
        <taxon>Desulfovibrionaceae</taxon>
        <taxon>Solidesulfovibrio</taxon>
    </lineage>
</organism>
<name>RL1_SOLM1</name>
<accession>C4XIP2</accession>
<evidence type="ECO:0000255" key="1">
    <source>
        <dbReference type="HAMAP-Rule" id="MF_01318"/>
    </source>
</evidence>
<evidence type="ECO:0000305" key="2"/>
<comment type="function">
    <text evidence="1">Binds directly to 23S rRNA. The L1 stalk is quite mobile in the ribosome, and is involved in E site tRNA release.</text>
</comment>
<comment type="function">
    <text evidence="1">Protein L1 is also a translational repressor protein, it controls the translation of the L11 operon by binding to its mRNA.</text>
</comment>
<comment type="subunit">
    <text evidence="1">Part of the 50S ribosomal subunit.</text>
</comment>
<comment type="similarity">
    <text evidence="1">Belongs to the universal ribosomal protein uL1 family.</text>
</comment>
<sequence length="235" mass="24999">MAKHGKNYREAIKDIDLTAKYEVSEAMALTVQTGKAKFDETVDVALNLGVNPKYSDQMVRGAVSLPHGLGKTIRVAAFCKGDKETEAREAGADFVGGDDLIEKVKNGFLDFDSAVATPDMMASVGKIGKILGPRGLMPNAKTGTVSFDIGKAVSELKAGKVEFKVDKAGVLHVPLGKRSFGPEKLLDNFRAVIDAVMRLKPSAAKGTYLQAMALATTMGPGIKVDTQSVRKLLEG</sequence>
<feature type="chain" id="PRO_1000214418" description="Large ribosomal subunit protein uL1">
    <location>
        <begin position="1"/>
        <end position="235"/>
    </location>
</feature>
<dbReference type="EMBL" id="AP010904">
    <property type="protein sequence ID" value="BAH76610.1"/>
    <property type="molecule type" value="Genomic_DNA"/>
</dbReference>
<dbReference type="RefSeq" id="WP_015861767.1">
    <property type="nucleotide sequence ID" value="NC_012796.1"/>
</dbReference>
<dbReference type="SMR" id="C4XIP2"/>
<dbReference type="STRING" id="573370.DMR_31190"/>
<dbReference type="KEGG" id="dma:DMR_31190"/>
<dbReference type="eggNOG" id="COG0081">
    <property type="taxonomic scope" value="Bacteria"/>
</dbReference>
<dbReference type="HOGENOM" id="CLU_062853_0_0_7"/>
<dbReference type="OrthoDB" id="9803740at2"/>
<dbReference type="Proteomes" id="UP000009071">
    <property type="component" value="Chromosome"/>
</dbReference>
<dbReference type="GO" id="GO:0015934">
    <property type="term" value="C:large ribosomal subunit"/>
    <property type="evidence" value="ECO:0007669"/>
    <property type="project" value="InterPro"/>
</dbReference>
<dbReference type="GO" id="GO:0019843">
    <property type="term" value="F:rRNA binding"/>
    <property type="evidence" value="ECO:0007669"/>
    <property type="project" value="UniProtKB-UniRule"/>
</dbReference>
<dbReference type="GO" id="GO:0003735">
    <property type="term" value="F:structural constituent of ribosome"/>
    <property type="evidence" value="ECO:0007669"/>
    <property type="project" value="InterPro"/>
</dbReference>
<dbReference type="GO" id="GO:0000049">
    <property type="term" value="F:tRNA binding"/>
    <property type="evidence" value="ECO:0007669"/>
    <property type="project" value="UniProtKB-KW"/>
</dbReference>
<dbReference type="GO" id="GO:0006417">
    <property type="term" value="P:regulation of translation"/>
    <property type="evidence" value="ECO:0007669"/>
    <property type="project" value="UniProtKB-KW"/>
</dbReference>
<dbReference type="GO" id="GO:0006412">
    <property type="term" value="P:translation"/>
    <property type="evidence" value="ECO:0007669"/>
    <property type="project" value="UniProtKB-UniRule"/>
</dbReference>
<dbReference type="CDD" id="cd00403">
    <property type="entry name" value="Ribosomal_L1"/>
    <property type="match status" value="1"/>
</dbReference>
<dbReference type="FunFam" id="3.40.50.790:FF:000001">
    <property type="entry name" value="50S ribosomal protein L1"/>
    <property type="match status" value="1"/>
</dbReference>
<dbReference type="Gene3D" id="3.30.190.20">
    <property type="match status" value="1"/>
</dbReference>
<dbReference type="Gene3D" id="3.40.50.790">
    <property type="match status" value="1"/>
</dbReference>
<dbReference type="HAMAP" id="MF_01318_B">
    <property type="entry name" value="Ribosomal_uL1_B"/>
    <property type="match status" value="1"/>
</dbReference>
<dbReference type="InterPro" id="IPR005878">
    <property type="entry name" value="Ribosom_uL1_bac-type"/>
</dbReference>
<dbReference type="InterPro" id="IPR002143">
    <property type="entry name" value="Ribosomal_uL1"/>
</dbReference>
<dbReference type="InterPro" id="IPR023674">
    <property type="entry name" value="Ribosomal_uL1-like"/>
</dbReference>
<dbReference type="InterPro" id="IPR028364">
    <property type="entry name" value="Ribosomal_uL1/biogenesis"/>
</dbReference>
<dbReference type="InterPro" id="IPR016095">
    <property type="entry name" value="Ribosomal_uL1_3-a/b-sand"/>
</dbReference>
<dbReference type="InterPro" id="IPR023673">
    <property type="entry name" value="Ribosomal_uL1_CS"/>
</dbReference>
<dbReference type="NCBIfam" id="TIGR01169">
    <property type="entry name" value="rplA_bact"/>
    <property type="match status" value="1"/>
</dbReference>
<dbReference type="PANTHER" id="PTHR36427">
    <property type="entry name" value="54S RIBOSOMAL PROTEIN L1, MITOCHONDRIAL"/>
    <property type="match status" value="1"/>
</dbReference>
<dbReference type="PANTHER" id="PTHR36427:SF3">
    <property type="entry name" value="LARGE RIBOSOMAL SUBUNIT PROTEIN UL1M"/>
    <property type="match status" value="1"/>
</dbReference>
<dbReference type="Pfam" id="PF00687">
    <property type="entry name" value="Ribosomal_L1"/>
    <property type="match status" value="1"/>
</dbReference>
<dbReference type="PIRSF" id="PIRSF002155">
    <property type="entry name" value="Ribosomal_L1"/>
    <property type="match status" value="1"/>
</dbReference>
<dbReference type="SUPFAM" id="SSF56808">
    <property type="entry name" value="Ribosomal protein L1"/>
    <property type="match status" value="1"/>
</dbReference>
<dbReference type="PROSITE" id="PS01199">
    <property type="entry name" value="RIBOSOMAL_L1"/>
    <property type="match status" value="1"/>
</dbReference>
<gene>
    <name evidence="1" type="primary">rplA</name>
    <name type="ordered locus">DMR_31190</name>
</gene>
<reference key="1">
    <citation type="journal article" date="2009" name="Genome Res.">
        <title>Whole genome sequence of Desulfovibrio magneticus strain RS-1 revealed common gene clusters in magnetotactic bacteria.</title>
        <authorList>
            <person name="Nakazawa H."/>
            <person name="Arakaki A."/>
            <person name="Narita-Yamada S."/>
            <person name="Yashiro I."/>
            <person name="Jinno K."/>
            <person name="Aoki N."/>
            <person name="Tsuruyama A."/>
            <person name="Okamura Y."/>
            <person name="Tanikawa S."/>
            <person name="Fujita N."/>
            <person name="Takeyama H."/>
            <person name="Matsunaga T."/>
        </authorList>
    </citation>
    <scope>NUCLEOTIDE SEQUENCE [LARGE SCALE GENOMIC DNA]</scope>
    <source>
        <strain>ATCC 700980 / DSM 13731 / RS-1</strain>
    </source>
</reference>